<sequence length="139" mass="15530">MGTIRLMHAKLHRVRVSEANVDYVGSITIDRELIERVGILPLEEVDVVNLSNGKRFSTYVFPGHTGEICPNGGAALLCQPGDILIIYAYEQRPRQEVLEKGHFAKVLVADAENRCQQFFEQSLIPRGDGRGVEFSSQEC</sequence>
<dbReference type="EC" id="4.1.1.11" evidence="1"/>
<dbReference type="EMBL" id="AP009552">
    <property type="protein sequence ID" value="BAG03542.1"/>
    <property type="molecule type" value="Genomic_DNA"/>
</dbReference>
<dbReference type="RefSeq" id="WP_012266525.1">
    <property type="nucleotide sequence ID" value="NC_010296.1"/>
</dbReference>
<dbReference type="SMR" id="B0JNW2"/>
<dbReference type="STRING" id="449447.MAE_37200"/>
<dbReference type="PaxDb" id="449447-MAE_37200"/>
<dbReference type="EnsemblBacteria" id="BAG03542">
    <property type="protein sequence ID" value="BAG03542"/>
    <property type="gene ID" value="MAE_37200"/>
</dbReference>
<dbReference type="KEGG" id="mar:MAE_37200"/>
<dbReference type="PATRIC" id="fig|449447.4.peg.3370"/>
<dbReference type="eggNOG" id="COG0853">
    <property type="taxonomic scope" value="Bacteria"/>
</dbReference>
<dbReference type="HOGENOM" id="CLU_115305_1_1_3"/>
<dbReference type="BioCyc" id="MAER449447:MAE_RS16110-MONOMER"/>
<dbReference type="UniPathway" id="UPA00028">
    <property type="reaction ID" value="UER00002"/>
</dbReference>
<dbReference type="Proteomes" id="UP000001510">
    <property type="component" value="Chromosome"/>
</dbReference>
<dbReference type="GO" id="GO:0005829">
    <property type="term" value="C:cytosol"/>
    <property type="evidence" value="ECO:0007669"/>
    <property type="project" value="TreeGrafter"/>
</dbReference>
<dbReference type="GO" id="GO:0004068">
    <property type="term" value="F:aspartate 1-decarboxylase activity"/>
    <property type="evidence" value="ECO:0007669"/>
    <property type="project" value="UniProtKB-UniRule"/>
</dbReference>
<dbReference type="GO" id="GO:0006523">
    <property type="term" value="P:alanine biosynthetic process"/>
    <property type="evidence" value="ECO:0007669"/>
    <property type="project" value="InterPro"/>
</dbReference>
<dbReference type="GO" id="GO:0015940">
    <property type="term" value="P:pantothenate biosynthetic process"/>
    <property type="evidence" value="ECO:0007669"/>
    <property type="project" value="UniProtKB-UniRule"/>
</dbReference>
<dbReference type="CDD" id="cd06919">
    <property type="entry name" value="Asp_decarbox"/>
    <property type="match status" value="1"/>
</dbReference>
<dbReference type="Gene3D" id="2.40.40.20">
    <property type="match status" value="1"/>
</dbReference>
<dbReference type="HAMAP" id="MF_00446">
    <property type="entry name" value="PanD"/>
    <property type="match status" value="1"/>
</dbReference>
<dbReference type="InterPro" id="IPR009010">
    <property type="entry name" value="Asp_de-COase-like_dom_sf"/>
</dbReference>
<dbReference type="InterPro" id="IPR003190">
    <property type="entry name" value="Asp_decarbox"/>
</dbReference>
<dbReference type="NCBIfam" id="TIGR00223">
    <property type="entry name" value="panD"/>
    <property type="match status" value="1"/>
</dbReference>
<dbReference type="PANTHER" id="PTHR21012">
    <property type="entry name" value="ASPARTATE 1-DECARBOXYLASE"/>
    <property type="match status" value="1"/>
</dbReference>
<dbReference type="PANTHER" id="PTHR21012:SF0">
    <property type="entry name" value="ASPARTATE 1-DECARBOXYLASE"/>
    <property type="match status" value="1"/>
</dbReference>
<dbReference type="Pfam" id="PF02261">
    <property type="entry name" value="Asp_decarbox"/>
    <property type="match status" value="1"/>
</dbReference>
<dbReference type="PIRSF" id="PIRSF006246">
    <property type="entry name" value="Asp_decarbox"/>
    <property type="match status" value="1"/>
</dbReference>
<dbReference type="SUPFAM" id="SSF50692">
    <property type="entry name" value="ADC-like"/>
    <property type="match status" value="1"/>
</dbReference>
<proteinExistence type="inferred from homology"/>
<comment type="function">
    <text evidence="1">Catalyzes the pyruvoyl-dependent decarboxylation of aspartate to produce beta-alanine.</text>
</comment>
<comment type="catalytic activity">
    <reaction evidence="1">
        <text>L-aspartate + H(+) = beta-alanine + CO2</text>
        <dbReference type="Rhea" id="RHEA:19497"/>
        <dbReference type="ChEBI" id="CHEBI:15378"/>
        <dbReference type="ChEBI" id="CHEBI:16526"/>
        <dbReference type="ChEBI" id="CHEBI:29991"/>
        <dbReference type="ChEBI" id="CHEBI:57966"/>
        <dbReference type="EC" id="4.1.1.11"/>
    </reaction>
</comment>
<comment type="cofactor">
    <cofactor evidence="1">
        <name>pyruvate</name>
        <dbReference type="ChEBI" id="CHEBI:15361"/>
    </cofactor>
    <text evidence="1">Binds 1 pyruvoyl group covalently per subunit.</text>
</comment>
<comment type="pathway">
    <text evidence="1">Cofactor biosynthesis; (R)-pantothenate biosynthesis; beta-alanine from L-aspartate: step 1/1.</text>
</comment>
<comment type="subunit">
    <text evidence="1">Heterooctamer of four alpha and four beta subunits.</text>
</comment>
<comment type="subcellular location">
    <subcellularLocation>
        <location evidence="1">Cytoplasm</location>
    </subcellularLocation>
</comment>
<comment type="PTM">
    <text evidence="1">Is synthesized initially as an inactive proenzyme, which is activated by self-cleavage at a specific serine bond to produce a beta-subunit with a hydroxyl group at its C-terminus and an alpha-subunit with a pyruvoyl group at its N-terminus.</text>
</comment>
<comment type="similarity">
    <text evidence="1">Belongs to the PanD family.</text>
</comment>
<gene>
    <name evidence="1" type="primary">panD</name>
    <name type="ordered locus">MAE_37200</name>
</gene>
<feature type="chain" id="PRO_1000080924" description="Aspartate 1-decarboxylase beta chain" evidence="1">
    <location>
        <begin position="1"/>
        <end position="25"/>
    </location>
</feature>
<feature type="chain" id="PRO_1000080925" description="Aspartate 1-decarboxylase alpha chain" evidence="1">
    <location>
        <begin position="26"/>
        <end position="139"/>
    </location>
</feature>
<feature type="active site" description="Schiff-base intermediate with substrate; via pyruvic acid" evidence="1">
    <location>
        <position position="26"/>
    </location>
</feature>
<feature type="active site" description="Proton donor" evidence="1">
    <location>
        <position position="59"/>
    </location>
</feature>
<feature type="binding site" evidence="1">
    <location>
        <position position="58"/>
    </location>
    <ligand>
        <name>substrate</name>
    </ligand>
</feature>
<feature type="binding site" evidence="1">
    <location>
        <begin position="72"/>
        <end position="74"/>
    </location>
    <ligand>
        <name>substrate</name>
    </ligand>
</feature>
<feature type="modified residue" description="Pyruvic acid (Ser)" evidence="1">
    <location>
        <position position="26"/>
    </location>
</feature>
<accession>B0JNW2</accession>
<protein>
    <recommendedName>
        <fullName evidence="1">Aspartate 1-decarboxylase</fullName>
        <ecNumber evidence="1">4.1.1.11</ecNumber>
    </recommendedName>
    <alternativeName>
        <fullName evidence="1">Aspartate alpha-decarboxylase</fullName>
    </alternativeName>
    <component>
        <recommendedName>
            <fullName evidence="1">Aspartate 1-decarboxylase beta chain</fullName>
        </recommendedName>
    </component>
    <component>
        <recommendedName>
            <fullName evidence="1">Aspartate 1-decarboxylase alpha chain</fullName>
        </recommendedName>
    </component>
</protein>
<organism>
    <name type="scientific">Microcystis aeruginosa (strain NIES-843 / IAM M-2473)</name>
    <dbReference type="NCBI Taxonomy" id="449447"/>
    <lineage>
        <taxon>Bacteria</taxon>
        <taxon>Bacillati</taxon>
        <taxon>Cyanobacteriota</taxon>
        <taxon>Cyanophyceae</taxon>
        <taxon>Oscillatoriophycideae</taxon>
        <taxon>Chroococcales</taxon>
        <taxon>Microcystaceae</taxon>
        <taxon>Microcystis</taxon>
    </lineage>
</organism>
<evidence type="ECO:0000255" key="1">
    <source>
        <dbReference type="HAMAP-Rule" id="MF_00446"/>
    </source>
</evidence>
<reference key="1">
    <citation type="journal article" date="2007" name="DNA Res.">
        <title>Complete genomic structure of the bloom-forming toxic cyanobacterium Microcystis aeruginosa NIES-843.</title>
        <authorList>
            <person name="Kaneko T."/>
            <person name="Nakajima N."/>
            <person name="Okamoto S."/>
            <person name="Suzuki I."/>
            <person name="Tanabe Y."/>
            <person name="Tamaoki M."/>
            <person name="Nakamura Y."/>
            <person name="Kasai F."/>
            <person name="Watanabe A."/>
            <person name="Kawashima K."/>
            <person name="Kishida Y."/>
            <person name="Ono A."/>
            <person name="Shimizu Y."/>
            <person name="Takahashi C."/>
            <person name="Minami C."/>
            <person name="Fujishiro T."/>
            <person name="Kohara M."/>
            <person name="Katoh M."/>
            <person name="Nakazaki N."/>
            <person name="Nakayama S."/>
            <person name="Yamada M."/>
            <person name="Tabata S."/>
            <person name="Watanabe M.M."/>
        </authorList>
    </citation>
    <scope>NUCLEOTIDE SEQUENCE [LARGE SCALE GENOMIC DNA]</scope>
    <source>
        <strain>NIES-843 / IAM M-247</strain>
    </source>
</reference>
<keyword id="KW-0068">Autocatalytic cleavage</keyword>
<keyword id="KW-0963">Cytoplasm</keyword>
<keyword id="KW-0210">Decarboxylase</keyword>
<keyword id="KW-0456">Lyase</keyword>
<keyword id="KW-0566">Pantothenate biosynthesis</keyword>
<keyword id="KW-0670">Pyruvate</keyword>
<keyword id="KW-0704">Schiff base</keyword>
<keyword id="KW-0865">Zymogen</keyword>
<name>PAND_MICAN</name>